<proteinExistence type="inferred from homology"/>
<feature type="chain" id="PRO_0000135714" description="Histidinol dehydrogenase">
    <location>
        <begin position="1"/>
        <end position="432"/>
    </location>
</feature>
<feature type="active site" description="Proton acceptor" evidence="1">
    <location>
        <position position="327"/>
    </location>
</feature>
<feature type="active site" description="Proton acceptor" evidence="1">
    <location>
        <position position="328"/>
    </location>
</feature>
<feature type="binding site" evidence="1">
    <location>
        <position position="130"/>
    </location>
    <ligand>
        <name>NAD(+)</name>
        <dbReference type="ChEBI" id="CHEBI:57540"/>
    </ligand>
</feature>
<feature type="binding site" evidence="1">
    <location>
        <position position="191"/>
    </location>
    <ligand>
        <name>NAD(+)</name>
        <dbReference type="ChEBI" id="CHEBI:57540"/>
    </ligand>
</feature>
<feature type="binding site" evidence="1">
    <location>
        <position position="214"/>
    </location>
    <ligand>
        <name>NAD(+)</name>
        <dbReference type="ChEBI" id="CHEBI:57540"/>
    </ligand>
</feature>
<feature type="binding site" evidence="1">
    <location>
        <position position="237"/>
    </location>
    <ligand>
        <name>substrate</name>
    </ligand>
</feature>
<feature type="binding site" evidence="1">
    <location>
        <position position="259"/>
    </location>
    <ligand>
        <name>substrate</name>
    </ligand>
</feature>
<feature type="binding site" evidence="1">
    <location>
        <position position="259"/>
    </location>
    <ligand>
        <name>Zn(2+)</name>
        <dbReference type="ChEBI" id="CHEBI:29105"/>
    </ligand>
</feature>
<feature type="binding site" evidence="1">
    <location>
        <position position="262"/>
    </location>
    <ligand>
        <name>substrate</name>
    </ligand>
</feature>
<feature type="binding site" evidence="1">
    <location>
        <position position="262"/>
    </location>
    <ligand>
        <name>Zn(2+)</name>
        <dbReference type="ChEBI" id="CHEBI:29105"/>
    </ligand>
</feature>
<feature type="binding site" evidence="1">
    <location>
        <position position="328"/>
    </location>
    <ligand>
        <name>substrate</name>
    </ligand>
</feature>
<feature type="binding site" evidence="1">
    <location>
        <position position="361"/>
    </location>
    <ligand>
        <name>substrate</name>
    </ligand>
</feature>
<feature type="binding site" evidence="1">
    <location>
        <position position="361"/>
    </location>
    <ligand>
        <name>Zn(2+)</name>
        <dbReference type="ChEBI" id="CHEBI:29105"/>
    </ligand>
</feature>
<feature type="binding site" evidence="1">
    <location>
        <position position="415"/>
    </location>
    <ligand>
        <name>substrate</name>
    </ligand>
</feature>
<feature type="binding site" evidence="1">
    <location>
        <position position="420"/>
    </location>
    <ligand>
        <name>substrate</name>
    </ligand>
</feature>
<feature type="binding site" evidence="1">
    <location>
        <position position="420"/>
    </location>
    <ligand>
        <name>Zn(2+)</name>
        <dbReference type="ChEBI" id="CHEBI:29105"/>
    </ligand>
</feature>
<name>HISX_AGRFC</name>
<protein>
    <recommendedName>
        <fullName evidence="1">Histidinol dehydrogenase</fullName>
        <shortName evidence="1">HDH</shortName>
        <ecNumber evidence="1">1.1.1.23</ecNumber>
    </recommendedName>
</protein>
<dbReference type="EC" id="1.1.1.23" evidence="1"/>
<dbReference type="EMBL" id="AE007869">
    <property type="protein sequence ID" value="AAK86351.1"/>
    <property type="molecule type" value="Genomic_DNA"/>
</dbReference>
<dbReference type="PIR" id="AE2642">
    <property type="entry name" value="AE2642"/>
</dbReference>
<dbReference type="PIR" id="F97424">
    <property type="entry name" value="F97424"/>
</dbReference>
<dbReference type="RefSeq" id="NP_353566.1">
    <property type="nucleotide sequence ID" value="NC_003062.2"/>
</dbReference>
<dbReference type="RefSeq" id="WP_010970966.1">
    <property type="nucleotide sequence ID" value="NC_003062.2"/>
</dbReference>
<dbReference type="SMR" id="Q8UHX1"/>
<dbReference type="STRING" id="176299.Atu0537"/>
<dbReference type="EnsemblBacteria" id="AAK86351">
    <property type="protein sequence ID" value="AAK86351"/>
    <property type="gene ID" value="Atu0537"/>
</dbReference>
<dbReference type="GeneID" id="1132575"/>
<dbReference type="KEGG" id="atu:Atu0537"/>
<dbReference type="PATRIC" id="fig|176299.10.peg.535"/>
<dbReference type="eggNOG" id="COG0141">
    <property type="taxonomic scope" value="Bacteria"/>
</dbReference>
<dbReference type="HOGENOM" id="CLU_006732_3_3_5"/>
<dbReference type="OrthoDB" id="9805269at2"/>
<dbReference type="PhylomeDB" id="Q8UHX1"/>
<dbReference type="BioCyc" id="AGRO:ATU0537-MONOMER"/>
<dbReference type="UniPathway" id="UPA00031">
    <property type="reaction ID" value="UER00014"/>
</dbReference>
<dbReference type="Proteomes" id="UP000000813">
    <property type="component" value="Chromosome circular"/>
</dbReference>
<dbReference type="GO" id="GO:0005829">
    <property type="term" value="C:cytosol"/>
    <property type="evidence" value="ECO:0007669"/>
    <property type="project" value="TreeGrafter"/>
</dbReference>
<dbReference type="GO" id="GO:0004399">
    <property type="term" value="F:histidinol dehydrogenase activity"/>
    <property type="evidence" value="ECO:0007669"/>
    <property type="project" value="UniProtKB-UniRule"/>
</dbReference>
<dbReference type="GO" id="GO:0051287">
    <property type="term" value="F:NAD binding"/>
    <property type="evidence" value="ECO:0007669"/>
    <property type="project" value="InterPro"/>
</dbReference>
<dbReference type="GO" id="GO:0008270">
    <property type="term" value="F:zinc ion binding"/>
    <property type="evidence" value="ECO:0007669"/>
    <property type="project" value="UniProtKB-UniRule"/>
</dbReference>
<dbReference type="GO" id="GO:0000105">
    <property type="term" value="P:L-histidine biosynthetic process"/>
    <property type="evidence" value="ECO:0007669"/>
    <property type="project" value="UniProtKB-UniRule"/>
</dbReference>
<dbReference type="CDD" id="cd06572">
    <property type="entry name" value="Histidinol_dh"/>
    <property type="match status" value="1"/>
</dbReference>
<dbReference type="FunFam" id="3.40.50.1980:FF:000010">
    <property type="entry name" value="Histidinol dehydrogenase"/>
    <property type="match status" value="1"/>
</dbReference>
<dbReference type="FunFam" id="3.40.50.1980:FF:000026">
    <property type="entry name" value="Histidinol dehydrogenase"/>
    <property type="match status" value="1"/>
</dbReference>
<dbReference type="FunFam" id="1.20.5.1300:FF:000002">
    <property type="entry name" value="Histidinol dehydrogenase, chloroplastic"/>
    <property type="match status" value="1"/>
</dbReference>
<dbReference type="Gene3D" id="1.20.5.1300">
    <property type="match status" value="1"/>
</dbReference>
<dbReference type="Gene3D" id="3.40.50.1980">
    <property type="entry name" value="Nitrogenase molybdenum iron protein domain"/>
    <property type="match status" value="2"/>
</dbReference>
<dbReference type="HAMAP" id="MF_01024">
    <property type="entry name" value="HisD"/>
    <property type="match status" value="1"/>
</dbReference>
<dbReference type="InterPro" id="IPR016161">
    <property type="entry name" value="Ald_DH/histidinol_DH"/>
</dbReference>
<dbReference type="InterPro" id="IPR001692">
    <property type="entry name" value="Histidinol_DH_CS"/>
</dbReference>
<dbReference type="InterPro" id="IPR022695">
    <property type="entry name" value="Histidinol_DH_monofunct"/>
</dbReference>
<dbReference type="InterPro" id="IPR012131">
    <property type="entry name" value="Hstdl_DH"/>
</dbReference>
<dbReference type="NCBIfam" id="TIGR00069">
    <property type="entry name" value="hisD"/>
    <property type="match status" value="1"/>
</dbReference>
<dbReference type="PANTHER" id="PTHR21256:SF2">
    <property type="entry name" value="HISTIDINE BIOSYNTHESIS TRIFUNCTIONAL PROTEIN"/>
    <property type="match status" value="1"/>
</dbReference>
<dbReference type="PANTHER" id="PTHR21256">
    <property type="entry name" value="HISTIDINOL DEHYDROGENASE HDH"/>
    <property type="match status" value="1"/>
</dbReference>
<dbReference type="Pfam" id="PF00815">
    <property type="entry name" value="Histidinol_dh"/>
    <property type="match status" value="1"/>
</dbReference>
<dbReference type="PIRSF" id="PIRSF000099">
    <property type="entry name" value="Histidinol_dh"/>
    <property type="match status" value="1"/>
</dbReference>
<dbReference type="PRINTS" id="PR00083">
    <property type="entry name" value="HOLDHDRGNASE"/>
</dbReference>
<dbReference type="SUPFAM" id="SSF53720">
    <property type="entry name" value="ALDH-like"/>
    <property type="match status" value="1"/>
</dbReference>
<dbReference type="PROSITE" id="PS00611">
    <property type="entry name" value="HISOL_DEHYDROGENASE"/>
    <property type="match status" value="1"/>
</dbReference>
<organism>
    <name type="scientific">Agrobacterium fabrum (strain C58 / ATCC 33970)</name>
    <name type="common">Agrobacterium tumefaciens (strain C58)</name>
    <dbReference type="NCBI Taxonomy" id="176299"/>
    <lineage>
        <taxon>Bacteria</taxon>
        <taxon>Pseudomonadati</taxon>
        <taxon>Pseudomonadota</taxon>
        <taxon>Alphaproteobacteria</taxon>
        <taxon>Hyphomicrobiales</taxon>
        <taxon>Rhizobiaceae</taxon>
        <taxon>Rhizobium/Agrobacterium group</taxon>
        <taxon>Agrobacterium</taxon>
        <taxon>Agrobacterium tumefaciens complex</taxon>
    </lineage>
</organism>
<sequence length="432" mass="45806">MAIWLERASADFEQKFAAFLTTKREVSEDVNATVRDIINDVRHRGDAALAHYSQKFDGIDFTRVSMRVTADEIDAAFSAVDRAVIEALELAARRIEKHHARQMPKDDIYEDDIGVGLGSRWTAIEAVGLYVPGGTASYPSSVLMNAVPAKVAGVERIVMVVPANGGAVNPAVLAAARIAGVEEIYRIGGAQAVAALAYGTETIAPVAKIVGPGNAYVAAAKRQVFGTVGIDMIAGPSEVLVIADKDNDPDWLAADLLAQAEHDRGAQSILITDNADLGKAVGAAVERQLKLLSRSETAAASWADFGAIILVEKLTDAIPLANRIAAEHLELAVDDPDALMAHIRNAGAIFVGRHTPEVIGDYVGGSNHVLPTARSARFSSGLSVLDFVKRTSILRLGPEQLRQLAPAAITLAHSEGLDAHARSVSIRLNPES</sequence>
<reference key="1">
    <citation type="journal article" date="2001" name="Science">
        <title>The genome of the natural genetic engineer Agrobacterium tumefaciens C58.</title>
        <authorList>
            <person name="Wood D.W."/>
            <person name="Setubal J.C."/>
            <person name="Kaul R."/>
            <person name="Monks D.E."/>
            <person name="Kitajima J.P."/>
            <person name="Okura V.K."/>
            <person name="Zhou Y."/>
            <person name="Chen L."/>
            <person name="Wood G.E."/>
            <person name="Almeida N.F. Jr."/>
            <person name="Woo L."/>
            <person name="Chen Y."/>
            <person name="Paulsen I.T."/>
            <person name="Eisen J.A."/>
            <person name="Karp P.D."/>
            <person name="Bovee D. Sr."/>
            <person name="Chapman P."/>
            <person name="Clendenning J."/>
            <person name="Deatherage G."/>
            <person name="Gillet W."/>
            <person name="Grant C."/>
            <person name="Kutyavin T."/>
            <person name="Levy R."/>
            <person name="Li M.-J."/>
            <person name="McClelland E."/>
            <person name="Palmieri A."/>
            <person name="Raymond C."/>
            <person name="Rouse G."/>
            <person name="Saenphimmachak C."/>
            <person name="Wu Z."/>
            <person name="Romero P."/>
            <person name="Gordon D."/>
            <person name="Zhang S."/>
            <person name="Yoo H."/>
            <person name="Tao Y."/>
            <person name="Biddle P."/>
            <person name="Jung M."/>
            <person name="Krespan W."/>
            <person name="Perry M."/>
            <person name="Gordon-Kamm B."/>
            <person name="Liao L."/>
            <person name="Kim S."/>
            <person name="Hendrick C."/>
            <person name="Zhao Z.-Y."/>
            <person name="Dolan M."/>
            <person name="Chumley F."/>
            <person name="Tingey S.V."/>
            <person name="Tomb J.-F."/>
            <person name="Gordon M.P."/>
            <person name="Olson M.V."/>
            <person name="Nester E.W."/>
        </authorList>
    </citation>
    <scope>NUCLEOTIDE SEQUENCE [LARGE SCALE GENOMIC DNA]</scope>
    <source>
        <strain>C58 / ATCC 33970</strain>
    </source>
</reference>
<reference key="2">
    <citation type="journal article" date="2001" name="Science">
        <title>Genome sequence of the plant pathogen and biotechnology agent Agrobacterium tumefaciens C58.</title>
        <authorList>
            <person name="Goodner B."/>
            <person name="Hinkle G."/>
            <person name="Gattung S."/>
            <person name="Miller N."/>
            <person name="Blanchard M."/>
            <person name="Qurollo B."/>
            <person name="Goldman B.S."/>
            <person name="Cao Y."/>
            <person name="Askenazi M."/>
            <person name="Halling C."/>
            <person name="Mullin L."/>
            <person name="Houmiel K."/>
            <person name="Gordon J."/>
            <person name="Vaudin M."/>
            <person name="Iartchouk O."/>
            <person name="Epp A."/>
            <person name="Liu F."/>
            <person name="Wollam C."/>
            <person name="Allinger M."/>
            <person name="Doughty D."/>
            <person name="Scott C."/>
            <person name="Lappas C."/>
            <person name="Markelz B."/>
            <person name="Flanagan C."/>
            <person name="Crowell C."/>
            <person name="Gurson J."/>
            <person name="Lomo C."/>
            <person name="Sear C."/>
            <person name="Strub G."/>
            <person name="Cielo C."/>
            <person name="Slater S."/>
        </authorList>
    </citation>
    <scope>NUCLEOTIDE SEQUENCE [LARGE SCALE GENOMIC DNA]</scope>
    <source>
        <strain>C58 / ATCC 33970</strain>
    </source>
</reference>
<comment type="function">
    <text evidence="1">Catalyzes the sequential NAD-dependent oxidations of L-histidinol to L-histidinaldehyde and then to L-histidine.</text>
</comment>
<comment type="catalytic activity">
    <reaction evidence="1">
        <text>L-histidinol + 2 NAD(+) + H2O = L-histidine + 2 NADH + 3 H(+)</text>
        <dbReference type="Rhea" id="RHEA:20641"/>
        <dbReference type="ChEBI" id="CHEBI:15377"/>
        <dbReference type="ChEBI" id="CHEBI:15378"/>
        <dbReference type="ChEBI" id="CHEBI:57540"/>
        <dbReference type="ChEBI" id="CHEBI:57595"/>
        <dbReference type="ChEBI" id="CHEBI:57699"/>
        <dbReference type="ChEBI" id="CHEBI:57945"/>
        <dbReference type="EC" id="1.1.1.23"/>
    </reaction>
</comment>
<comment type="cofactor">
    <cofactor evidence="1">
        <name>Zn(2+)</name>
        <dbReference type="ChEBI" id="CHEBI:29105"/>
    </cofactor>
    <text evidence="1">Binds 1 zinc ion per subunit.</text>
</comment>
<comment type="pathway">
    <text evidence="1">Amino-acid biosynthesis; L-histidine biosynthesis; L-histidine from 5-phospho-alpha-D-ribose 1-diphosphate: step 9/9.</text>
</comment>
<comment type="similarity">
    <text evidence="1">Belongs to the histidinol dehydrogenase family.</text>
</comment>
<keyword id="KW-0028">Amino-acid biosynthesis</keyword>
<keyword id="KW-0368">Histidine biosynthesis</keyword>
<keyword id="KW-0479">Metal-binding</keyword>
<keyword id="KW-0520">NAD</keyword>
<keyword id="KW-0560">Oxidoreductase</keyword>
<keyword id="KW-1185">Reference proteome</keyword>
<keyword id="KW-0862">Zinc</keyword>
<accession>Q8UHX1</accession>
<gene>
    <name evidence="1" type="primary">hisD</name>
    <name type="ordered locus">Atu0537</name>
    <name type="ORF">AGR_C_948</name>
</gene>
<evidence type="ECO:0000255" key="1">
    <source>
        <dbReference type="HAMAP-Rule" id="MF_01024"/>
    </source>
</evidence>